<accession>Q12NR3</accession>
<dbReference type="EMBL" id="CP000302">
    <property type="protein sequence ID" value="ABE54913.1"/>
    <property type="molecule type" value="Genomic_DNA"/>
</dbReference>
<dbReference type="RefSeq" id="WP_011496071.1">
    <property type="nucleotide sequence ID" value="NC_007954.1"/>
</dbReference>
<dbReference type="SMR" id="Q12NR3"/>
<dbReference type="STRING" id="318161.Sden_1629"/>
<dbReference type="KEGG" id="sdn:Sden_1629"/>
<dbReference type="eggNOG" id="COG0850">
    <property type="taxonomic scope" value="Bacteria"/>
</dbReference>
<dbReference type="HOGENOM" id="CLU_067812_0_1_6"/>
<dbReference type="OrthoDB" id="9794530at2"/>
<dbReference type="Proteomes" id="UP000001982">
    <property type="component" value="Chromosome"/>
</dbReference>
<dbReference type="GO" id="GO:0000902">
    <property type="term" value="P:cell morphogenesis"/>
    <property type="evidence" value="ECO:0007669"/>
    <property type="project" value="InterPro"/>
</dbReference>
<dbReference type="GO" id="GO:0000917">
    <property type="term" value="P:division septum assembly"/>
    <property type="evidence" value="ECO:0007669"/>
    <property type="project" value="UniProtKB-KW"/>
</dbReference>
<dbReference type="GO" id="GO:0051302">
    <property type="term" value="P:regulation of cell division"/>
    <property type="evidence" value="ECO:0007669"/>
    <property type="project" value="InterPro"/>
</dbReference>
<dbReference type="GO" id="GO:1901891">
    <property type="term" value="P:regulation of cell septum assembly"/>
    <property type="evidence" value="ECO:0007669"/>
    <property type="project" value="InterPro"/>
</dbReference>
<dbReference type="Gene3D" id="2.160.20.70">
    <property type="match status" value="1"/>
</dbReference>
<dbReference type="Gene3D" id="3.30.70.260">
    <property type="match status" value="1"/>
</dbReference>
<dbReference type="HAMAP" id="MF_00267">
    <property type="entry name" value="MinC"/>
    <property type="match status" value="1"/>
</dbReference>
<dbReference type="InterPro" id="IPR016098">
    <property type="entry name" value="CAP/MinC_C"/>
</dbReference>
<dbReference type="InterPro" id="IPR013033">
    <property type="entry name" value="MinC"/>
</dbReference>
<dbReference type="InterPro" id="IPR036145">
    <property type="entry name" value="MinC_C_sf"/>
</dbReference>
<dbReference type="InterPro" id="IPR007874">
    <property type="entry name" value="MinC_N"/>
</dbReference>
<dbReference type="InterPro" id="IPR005526">
    <property type="entry name" value="Septum_form_inhib_MinC_C"/>
</dbReference>
<dbReference type="NCBIfam" id="TIGR01222">
    <property type="entry name" value="minC"/>
    <property type="match status" value="1"/>
</dbReference>
<dbReference type="PANTHER" id="PTHR34108">
    <property type="entry name" value="SEPTUM SITE-DETERMINING PROTEIN MINC"/>
    <property type="match status" value="1"/>
</dbReference>
<dbReference type="PANTHER" id="PTHR34108:SF1">
    <property type="entry name" value="SEPTUM SITE-DETERMINING PROTEIN MINC"/>
    <property type="match status" value="1"/>
</dbReference>
<dbReference type="Pfam" id="PF03775">
    <property type="entry name" value="MinC_C"/>
    <property type="match status" value="1"/>
</dbReference>
<dbReference type="Pfam" id="PF05209">
    <property type="entry name" value="MinC_N"/>
    <property type="match status" value="1"/>
</dbReference>
<dbReference type="SUPFAM" id="SSF63848">
    <property type="entry name" value="Cell-division inhibitor MinC, C-terminal domain"/>
    <property type="match status" value="1"/>
</dbReference>
<sequence>MSKQSLELKATSFTLSVLHIKNHDLIALAAELDQKLSQAPQFFIGAPLVINLKAVEKHCLDLSALKTLLMDRQLIIVGITEASPELIEQARALGLAVIKSGKQATTAPLPQRETKVVKQNVRSGQQIYAKNADLVIFGAVGNGAEVIADGSIHIYGALRGKAMAGAAGDHNSVIIANSLEAELVSISGQYWLAEHLQQHSLDKRACIRRDGESLMVETLPQ</sequence>
<evidence type="ECO:0000255" key="1">
    <source>
        <dbReference type="HAMAP-Rule" id="MF_00267"/>
    </source>
</evidence>
<organism>
    <name type="scientific">Shewanella denitrificans (strain OS217 / ATCC BAA-1090 / DSM 15013)</name>
    <dbReference type="NCBI Taxonomy" id="318161"/>
    <lineage>
        <taxon>Bacteria</taxon>
        <taxon>Pseudomonadati</taxon>
        <taxon>Pseudomonadota</taxon>
        <taxon>Gammaproteobacteria</taxon>
        <taxon>Alteromonadales</taxon>
        <taxon>Shewanellaceae</taxon>
        <taxon>Shewanella</taxon>
    </lineage>
</organism>
<gene>
    <name evidence="1" type="primary">minC</name>
    <name type="ordered locus">Sden_1629</name>
</gene>
<reference key="1">
    <citation type="submission" date="2006-03" db="EMBL/GenBank/DDBJ databases">
        <title>Complete sequence of Shewanella denitrificans OS217.</title>
        <authorList>
            <consortium name="US DOE Joint Genome Institute"/>
            <person name="Copeland A."/>
            <person name="Lucas S."/>
            <person name="Lapidus A."/>
            <person name="Barry K."/>
            <person name="Detter J.C."/>
            <person name="Glavina del Rio T."/>
            <person name="Hammon N."/>
            <person name="Israni S."/>
            <person name="Dalin E."/>
            <person name="Tice H."/>
            <person name="Pitluck S."/>
            <person name="Brettin T."/>
            <person name="Bruce D."/>
            <person name="Han C."/>
            <person name="Tapia R."/>
            <person name="Gilna P."/>
            <person name="Kiss H."/>
            <person name="Schmutz J."/>
            <person name="Larimer F."/>
            <person name="Land M."/>
            <person name="Hauser L."/>
            <person name="Kyrpides N."/>
            <person name="Lykidis A."/>
            <person name="Richardson P."/>
        </authorList>
    </citation>
    <scope>NUCLEOTIDE SEQUENCE [LARGE SCALE GENOMIC DNA]</scope>
    <source>
        <strain>OS217 / ATCC BAA-1090 / DSM 15013</strain>
    </source>
</reference>
<name>MINC_SHEDO</name>
<comment type="function">
    <text evidence="1">Cell division inhibitor that blocks the formation of polar Z ring septums. Rapidly oscillates between the poles of the cell to destabilize FtsZ filaments that have formed before they mature into polar Z rings. Prevents FtsZ polymerization.</text>
</comment>
<comment type="subunit">
    <text evidence="1">Interacts with MinD and FtsZ.</text>
</comment>
<comment type="similarity">
    <text evidence="1">Belongs to the MinC family.</text>
</comment>
<feature type="chain" id="PRO_1000047857" description="Probable septum site-determining protein MinC">
    <location>
        <begin position="1"/>
        <end position="221"/>
    </location>
</feature>
<proteinExistence type="inferred from homology"/>
<keyword id="KW-0131">Cell cycle</keyword>
<keyword id="KW-0132">Cell division</keyword>
<keyword id="KW-1185">Reference proteome</keyword>
<keyword id="KW-0717">Septation</keyword>
<protein>
    <recommendedName>
        <fullName evidence="1">Probable septum site-determining protein MinC</fullName>
    </recommendedName>
</protein>